<gene>
    <name evidence="5" type="primary">TAP19</name>
    <name evidence="7" type="ORF">TTHERM_00658760</name>
</gene>
<accession>D2CVN7</accession>
<accession>I7MM24</accession>
<feature type="chain" id="PRO_0000449908" description="Telomerase-associated protein of 19 kDa">
    <location>
        <begin position="1"/>
        <end position="164"/>
    </location>
</feature>
<feature type="mutagenesis site" description="Abolished interaction with TAP45/p45; overexpression causes telomere 3'-overhang elongation." evidence="4">
    <original>R</original>
    <variation>E</variation>
    <location>
        <position position="38"/>
    </location>
</feature>
<feature type="mutagenesis site" description="Abolished interaction with TAP45/p45." evidence="4">
    <original>Y</original>
    <variation>A</variation>
    <location>
        <position position="145"/>
    </location>
</feature>
<feature type="mutagenesis site" description="Abolished interaction with TAP45/p45." evidence="4">
    <original>M</original>
    <variation>W</variation>
    <location>
        <position position="147"/>
    </location>
</feature>
<feature type="mutagenesis site" description="Does not affect interaction with TAP45/p45." evidence="4">
    <original>A</original>
    <variation>R</variation>
    <variation>W</variation>
    <location>
        <position position="158"/>
    </location>
</feature>
<feature type="mutagenesis site" description="Abolished interaction with TAP45/p45." evidence="4">
    <original>I</original>
    <variation>R</variation>
    <location>
        <position position="161"/>
    </location>
</feature>
<feature type="helix" evidence="11">
    <location>
        <begin position="16"/>
        <end position="18"/>
    </location>
</feature>
<feature type="helix" evidence="11">
    <location>
        <begin position="19"/>
        <end position="23"/>
    </location>
</feature>
<feature type="strand" evidence="12">
    <location>
        <begin position="31"/>
        <end position="33"/>
    </location>
</feature>
<feature type="strand" evidence="11">
    <location>
        <begin position="35"/>
        <end position="47"/>
    </location>
</feature>
<feature type="helix" evidence="11">
    <location>
        <begin position="49"/>
        <end position="58"/>
    </location>
</feature>
<feature type="turn" evidence="11">
    <location>
        <begin position="59"/>
        <end position="61"/>
    </location>
</feature>
<feature type="helix" evidence="11">
    <location>
        <begin position="65"/>
        <end position="77"/>
    </location>
</feature>
<feature type="helix" evidence="11">
    <location>
        <begin position="79"/>
        <end position="82"/>
    </location>
</feature>
<feature type="strand" evidence="11">
    <location>
        <begin position="94"/>
        <end position="99"/>
    </location>
</feature>
<feature type="strand" evidence="11">
    <location>
        <begin position="102"/>
        <end position="107"/>
    </location>
</feature>
<feature type="strand" evidence="11">
    <location>
        <begin position="112"/>
        <end position="115"/>
    </location>
</feature>
<feature type="strand" evidence="11">
    <location>
        <begin position="122"/>
        <end position="131"/>
    </location>
</feature>
<feature type="helix" evidence="11">
    <location>
        <begin position="133"/>
        <end position="135"/>
    </location>
</feature>
<feature type="strand" evidence="11">
    <location>
        <begin position="137"/>
        <end position="145"/>
    </location>
</feature>
<feature type="helix" evidence="11">
    <location>
        <begin position="150"/>
        <end position="159"/>
    </location>
</feature>
<reference key="1">
    <citation type="journal article" date="2009" name="Mol. Cell">
        <title>An RPA-related sequence-specific DNA-binding subunit of telomerase holoenzyme is required for elongation processivity and telomere maintenance.</title>
        <authorList>
            <person name="Min B."/>
            <person name="Collins K."/>
        </authorList>
    </citation>
    <scope>NUCLEOTIDE SEQUENCE [MRNA]</scope>
    <scope>IDENTIFICATION IN THE TELOMERASE HOLOENZYME</scope>
    <scope>DISRUPTION PHENOTYPE</scope>
    <source>
        <strain>SB210</strain>
    </source>
</reference>
<reference key="2">
    <citation type="journal article" date="2006" name="PLoS Biol.">
        <title>Macronuclear genome sequence of the ciliate Tetrahymena thermophila, a model eukaryote.</title>
        <authorList>
            <person name="Eisen J.A."/>
            <person name="Coyne R.S."/>
            <person name="Wu M."/>
            <person name="Wu D."/>
            <person name="Thiagarajan M."/>
            <person name="Wortman J.R."/>
            <person name="Badger J.H."/>
            <person name="Ren Q."/>
            <person name="Amedeo P."/>
            <person name="Jones K.M."/>
            <person name="Tallon L.J."/>
            <person name="Delcher A.L."/>
            <person name="Salzberg S.L."/>
            <person name="Silva J.C."/>
            <person name="Haas B.J."/>
            <person name="Majoros W.H."/>
            <person name="Farzad M."/>
            <person name="Carlton J.M."/>
            <person name="Smith R.K. Jr."/>
            <person name="Garg J."/>
            <person name="Pearlman R.E."/>
            <person name="Karrer K.M."/>
            <person name="Sun L."/>
            <person name="Manning G."/>
            <person name="Elde N.C."/>
            <person name="Turkewitz A.P."/>
            <person name="Asai D.J."/>
            <person name="Wilkes D.E."/>
            <person name="Wang Y."/>
            <person name="Cai H."/>
            <person name="Collins K."/>
            <person name="Stewart B.A."/>
            <person name="Lee S.R."/>
            <person name="Wilamowska K."/>
            <person name="Weinberg Z."/>
            <person name="Ruzzo W.L."/>
            <person name="Wloga D."/>
            <person name="Gaertig J."/>
            <person name="Frankel J."/>
            <person name="Tsao C.-C."/>
            <person name="Gorovsky M.A."/>
            <person name="Keeling P.J."/>
            <person name="Waller R.F."/>
            <person name="Patron N.J."/>
            <person name="Cherry J.M."/>
            <person name="Stover N.A."/>
            <person name="Krieger C.J."/>
            <person name="del Toro C."/>
            <person name="Ryder H.F."/>
            <person name="Williamson S.C."/>
            <person name="Barbeau R.A."/>
            <person name="Hamilton E.P."/>
            <person name="Orias E."/>
        </authorList>
    </citation>
    <scope>NUCLEOTIDE SEQUENCE [LARGE SCALE GENOMIC DNA]</scope>
    <source>
        <strain>SB210</strain>
    </source>
</reference>
<reference key="3">
    <citation type="journal article" date="2013" name="Nature">
        <title>The architecture of Tetrahymena telomerase holoenzyme.</title>
        <authorList>
            <person name="Jiang J."/>
            <person name="Miracco E.J."/>
            <person name="Hong K."/>
            <person name="Eckert B."/>
            <person name="Chan H."/>
            <person name="Cash D.D."/>
            <person name="Min B."/>
            <person name="Zhou Z.H."/>
            <person name="Collins K."/>
            <person name="Feigon J."/>
        </authorList>
    </citation>
    <scope>STRUCTURE BY ELECTRON MICROSCOPY OF THE TELOMERASE HOLOENZYME</scope>
</reference>
<reference evidence="8" key="4">
    <citation type="journal article" date="2015" name="Science">
        <title>Structure of Tetrahymena telomerase reveals previously unknown subunits, functions, and interactions.</title>
        <authorList>
            <person name="Jiang J."/>
            <person name="Chan H."/>
            <person name="Cash D.D."/>
            <person name="Miracco E.J."/>
            <person name="Ogorzalek Loo R.R."/>
            <person name="Upton H.E."/>
            <person name="Cascio D."/>
            <person name="O'Brien Johnson R."/>
            <person name="Collins K."/>
            <person name="Loo J.A."/>
            <person name="Zhou Z.H."/>
            <person name="Feigon J."/>
        </authorList>
    </citation>
    <scope>X-RAY CRYSTALLOGRAPHY (2.38 ANGSTROMS) OF 1-157</scope>
    <scope>STRUCTURE BY ELECTRON MICROSCOPY OF THE TELOMERASE HOLOENZYME</scope>
</reference>
<reference evidence="9 10" key="5">
    <citation type="journal article" date="2015" name="Nat. Struct. Mol. Biol.">
        <title>The Tetrahymena telomerase p75-p45-p19 subcomplex is a unique CST complex.</title>
        <authorList>
            <person name="Wan B."/>
            <person name="Tang T."/>
            <person name="Upton H."/>
            <person name="Shuai J."/>
            <person name="Zhou Y."/>
            <person name="Li S."/>
            <person name="Chen J."/>
            <person name="Brunzelle J.S."/>
            <person name="Zeng Z."/>
            <person name="Collins K."/>
            <person name="Wu J."/>
            <person name="Lei M."/>
        </authorList>
    </citation>
    <scope>X-RAY CRYSTALLOGRAPHY (1.70 ANGSTROMS) OF 12-174 IN COMPLEX WITH TAP45 AND TAP75</scope>
    <scope>FUNCTION</scope>
    <scope>IDENTIFICATION IN THE TELOMERASE HOLOENZYME</scope>
    <scope>MUTAGENESIS OF ARG-38; TYR-145; MET-147; ALA-158 AND ILE-161</scope>
</reference>
<keyword id="KW-0002">3D-structure</keyword>
<keyword id="KW-0158">Chromosome</keyword>
<keyword id="KW-1185">Reference proteome</keyword>
<keyword id="KW-0779">Telomere</keyword>
<comment type="function">
    <text evidence="4">Component of a CST-like subcomplex of the holoenzyme telomerase ribonucleoprotein complex, which stimulates telomerase complementary-strand synthesis (PubMed:26551074). Telomerase is an essential ribonucleoprotein enzyme that copies new telomeric repeats onto chromosome ends by repetitively synthesizing the short telomere-repeat sequence 5'-TTGGGG-3' using an RNA template component TER (PubMed:26551074). The CST-like subcomplex (also named 7-4-1) binds telomeric single-stranded DNA and coordinates telomere G-strand and C-strand synthesis (PubMed:26551074).</text>
</comment>
<comment type="subunit">
    <text evidence="1 2 3 4">Component of the telomerase holoenzyme complex, composed of the catalytic core (the catalytic subunit TERT, the telomerase RNA template component TER and TAP65/p65), which is associated with two heterotrimeric subcomplexes: (i) the replication protein A (RPA)-related subcomplex, composed of TEB1, RPA2/TEB2 and RPA3/TEB3 and (ii) the CST-like subcomplex, composed of TAP75/p75, TAP45/p45 and TAP19/p19 (PubMed:19941821, PubMed:23552895, PubMed:26472759, PubMed:26551074). TEB1 and the CST-like subcomplex are tethered to the catalytic core by TAP50/p50 (PubMed:19941821, PubMed:23552895, PubMed:26472759).</text>
</comment>
<comment type="interaction">
    <interactant intactId="EBI-16181555">
        <id>D2CVN7</id>
    </interactant>
    <interactant intactId="EBI-16181547">
        <id>Q6JXI5</id>
        <label>TAP45</label>
    </interactant>
    <organismsDiffer>false</organismsDiffer>
    <experiments>9</experiments>
</comment>
<comment type="subcellular location">
    <subcellularLocation>
        <location evidence="6">Chromosome</location>
        <location evidence="6">Telomere</location>
    </subcellularLocation>
</comment>
<comment type="disruption phenotype">
    <text evidence="1">Critically short telomeres.</text>
</comment>
<comment type="sequence caution" evidence="6">
    <conflict type="erroneous initiation">
        <sequence resource="EMBL-CDS" id="EAS03832"/>
    </conflict>
    <text>Extended N-terminus.</text>
</comment>
<protein>
    <recommendedName>
        <fullName evidence="5">Telomerase-associated protein of 19 kDa</fullName>
        <shortName evidence="5">p19</shortName>
    </recommendedName>
</protein>
<dbReference type="EMBL" id="EU873082">
    <property type="protein sequence ID" value="ACJ61512.1"/>
    <property type="molecule type" value="mRNA"/>
</dbReference>
<dbReference type="EMBL" id="GG662471">
    <property type="protein sequence ID" value="EAS03832.1"/>
    <property type="status" value="ALT_INIT"/>
    <property type="molecule type" value="Genomic_DNA"/>
</dbReference>
<dbReference type="RefSeq" id="XP_001024077.1">
    <property type="nucleotide sequence ID" value="XM_001024077.1"/>
</dbReference>
<dbReference type="PDB" id="5DFM">
    <property type="method" value="X-ray"/>
    <property type="resolution" value="2.30 A"/>
    <property type="chains" value="A/B=1-157"/>
</dbReference>
<dbReference type="PDB" id="5DOF">
    <property type="method" value="X-ray"/>
    <property type="resolution" value="1.70 A"/>
    <property type="chains" value="A/B/C/D=1-157"/>
</dbReference>
<dbReference type="PDB" id="5DOI">
    <property type="method" value="X-ray"/>
    <property type="resolution" value="2.20 A"/>
    <property type="chains" value="A/B/C/D=1-157"/>
</dbReference>
<dbReference type="PDB" id="7UY5">
    <property type="method" value="EM"/>
    <property type="resolution" value="3.50 A"/>
    <property type="chains" value="K=1-164"/>
</dbReference>
<dbReference type="PDB" id="7UY7">
    <property type="method" value="EM"/>
    <property type="resolution" value="4.20 A"/>
    <property type="chains" value="C=1-164"/>
</dbReference>
<dbReference type="PDBsum" id="5DFM"/>
<dbReference type="PDBsum" id="5DOF"/>
<dbReference type="PDBsum" id="5DOI"/>
<dbReference type="PDBsum" id="7UY5"/>
<dbReference type="PDBsum" id="7UY7"/>
<dbReference type="EMDB" id="EMD-26863"/>
<dbReference type="EMDB" id="EMD-26866"/>
<dbReference type="SMR" id="D2CVN7"/>
<dbReference type="DIP" id="DIP-60206N"/>
<dbReference type="DIP" id="DIP-61868N"/>
<dbReference type="IntAct" id="D2CVN7">
    <property type="interactions" value="5"/>
</dbReference>
<dbReference type="STRING" id="312017.I7MM24"/>
<dbReference type="EnsemblProtists" id="EAS03832">
    <property type="protein sequence ID" value="EAS03832"/>
    <property type="gene ID" value="TTHERM_00658760"/>
</dbReference>
<dbReference type="GeneID" id="7833732"/>
<dbReference type="KEGG" id="tet:TTHERM_00658760"/>
<dbReference type="HOGENOM" id="CLU_1543139_0_0_1"/>
<dbReference type="InParanoid" id="D2CVN7"/>
<dbReference type="EvolutionaryTrace" id="D2CVN7"/>
<dbReference type="Proteomes" id="UP000009168">
    <property type="component" value="Unassembled WGS sequence"/>
</dbReference>
<dbReference type="GO" id="GO:0000781">
    <property type="term" value="C:chromosome, telomeric region"/>
    <property type="evidence" value="ECO:0007669"/>
    <property type="project" value="UniProtKB-SubCell"/>
</dbReference>
<dbReference type="GO" id="GO:0005697">
    <property type="term" value="C:telomerase holoenzyme complex"/>
    <property type="evidence" value="ECO:0000314"/>
    <property type="project" value="UniProtKB"/>
</dbReference>
<dbReference type="GO" id="GO:0007004">
    <property type="term" value="P:telomere maintenance via telomerase"/>
    <property type="evidence" value="ECO:0000315"/>
    <property type="project" value="UniProtKB"/>
</dbReference>
<proteinExistence type="evidence at protein level"/>
<evidence type="ECO:0000269" key="1">
    <source>
    </source>
</evidence>
<evidence type="ECO:0000269" key="2">
    <source>
    </source>
</evidence>
<evidence type="ECO:0000269" key="3">
    <source>
    </source>
</evidence>
<evidence type="ECO:0000269" key="4">
    <source>
    </source>
</evidence>
<evidence type="ECO:0000303" key="5">
    <source>
    </source>
</evidence>
<evidence type="ECO:0000305" key="6"/>
<evidence type="ECO:0000312" key="7">
    <source>
        <dbReference type="EMBL" id="EAS03832.1"/>
    </source>
</evidence>
<evidence type="ECO:0007744" key="8">
    <source>
        <dbReference type="PDB" id="5DFM"/>
    </source>
</evidence>
<evidence type="ECO:0007744" key="9">
    <source>
        <dbReference type="PDB" id="5DOF"/>
    </source>
</evidence>
<evidence type="ECO:0007744" key="10">
    <source>
        <dbReference type="PDB" id="5DOI"/>
    </source>
</evidence>
<evidence type="ECO:0007829" key="11">
    <source>
        <dbReference type="PDB" id="5DOF"/>
    </source>
</evidence>
<evidence type="ECO:0007829" key="12">
    <source>
        <dbReference type="PDB" id="5DOI"/>
    </source>
</evidence>
<organism>
    <name type="scientific">Tetrahymena thermophila (strain SB210)</name>
    <dbReference type="NCBI Taxonomy" id="312017"/>
    <lineage>
        <taxon>Eukaryota</taxon>
        <taxon>Sar</taxon>
        <taxon>Alveolata</taxon>
        <taxon>Ciliophora</taxon>
        <taxon>Intramacronucleata</taxon>
        <taxon>Oligohymenophorea</taxon>
        <taxon>Hymenostomatida</taxon>
        <taxon>Tetrahymenina</taxon>
        <taxon>Tetrahymenidae</taxon>
        <taxon>Tetrahymena</taxon>
    </lineage>
</organism>
<sequence>MQQPKRNFDLYKLITDKQIDFQVADLIQDEQSSFVSVRIYGQFKCFVPKSTIQEQLDKIKNLSSKELAKNKIFKFLSEYNKNNQKQDELSHDYYGYFKVQQHQFILNLENAQREASLAVDDFYFINGRIYKTNHDILILQAHHVYQMQKPTLQLLQAASEINQN</sequence>
<name>TAP19_TETTS</name>